<feature type="chain" id="PRO_0000416358" description="NAD(P)H-hydrate epimerase">
    <location>
        <begin position="1"/>
        <end position="212"/>
    </location>
</feature>
<feature type="domain" description="YjeF N-terminal" evidence="1">
    <location>
        <begin position="11"/>
        <end position="212"/>
    </location>
</feature>
<feature type="binding site" evidence="1">
    <location>
        <begin position="60"/>
        <end position="64"/>
    </location>
    <ligand>
        <name>(6S)-NADPHX</name>
        <dbReference type="ChEBI" id="CHEBI:64076"/>
    </ligand>
</feature>
<feature type="binding site" evidence="1">
    <location>
        <position position="61"/>
    </location>
    <ligand>
        <name>K(+)</name>
        <dbReference type="ChEBI" id="CHEBI:29103"/>
    </ligand>
</feature>
<feature type="binding site" evidence="1">
    <location>
        <position position="123"/>
    </location>
    <ligand>
        <name>K(+)</name>
        <dbReference type="ChEBI" id="CHEBI:29103"/>
    </ligand>
</feature>
<feature type="binding site" evidence="1">
    <location>
        <begin position="127"/>
        <end position="133"/>
    </location>
    <ligand>
        <name>(6S)-NADPHX</name>
        <dbReference type="ChEBI" id="CHEBI:64076"/>
    </ligand>
</feature>
<feature type="binding site" evidence="1">
    <location>
        <position position="138"/>
    </location>
    <ligand>
        <name>(6S)-NADPHX</name>
        <dbReference type="ChEBI" id="CHEBI:64076"/>
    </ligand>
</feature>
<feature type="binding site" evidence="1">
    <location>
        <position position="156"/>
    </location>
    <ligand>
        <name>(6S)-NADPHX</name>
        <dbReference type="ChEBI" id="CHEBI:64076"/>
    </ligand>
</feature>
<feature type="binding site" evidence="1">
    <location>
        <position position="159"/>
    </location>
    <ligand>
        <name>K(+)</name>
        <dbReference type="ChEBI" id="CHEBI:29103"/>
    </ligand>
</feature>
<evidence type="ECO:0000255" key="1">
    <source>
        <dbReference type="HAMAP-Rule" id="MF_01966"/>
    </source>
</evidence>
<name>NNRE_LIMRS</name>
<proteinExistence type="inferred from homology"/>
<organism>
    <name type="scientific">Limosilactobacillus reuteri (strain ATCC 55730 / SD2112)</name>
    <name type="common">Lactobacillus reuteri</name>
    <dbReference type="NCBI Taxonomy" id="491077"/>
    <lineage>
        <taxon>Bacteria</taxon>
        <taxon>Bacillati</taxon>
        <taxon>Bacillota</taxon>
        <taxon>Bacilli</taxon>
        <taxon>Lactobacillales</taxon>
        <taxon>Lactobacillaceae</taxon>
        <taxon>Limosilactobacillus</taxon>
    </lineage>
</organism>
<gene>
    <name evidence="1" type="primary">nnrE</name>
    <name type="ordered locus">HMPREF0538_21057</name>
</gene>
<accession>F8DQP1</accession>
<protein>
    <recommendedName>
        <fullName evidence="1">NAD(P)H-hydrate epimerase</fullName>
        <ecNumber evidence="1">5.1.99.6</ecNumber>
    </recommendedName>
    <alternativeName>
        <fullName evidence="1">NAD(P)HX epimerase</fullName>
    </alternativeName>
</protein>
<sequence length="212" mass="22399">MTDKIVTSEEMRHYDSYTINTIGIPSLVLMERAALAVRDEILHAFPIALKDVVVVAGSGNNGGDGIAIARLLHLAGVHVTILNIGNPKHASAEHQTQEKIAQYYQIPETSDLAVLNKATLIVDAMFGIGIDRAVKGAYADAINAINNTDVVVVAVDMPSGINTDTGEVMGTAVRATTTVTFAYNKVGLTKNAGKDYAGNIVVANDMGTYAVD</sequence>
<keyword id="KW-0413">Isomerase</keyword>
<keyword id="KW-0479">Metal-binding</keyword>
<keyword id="KW-0520">NAD</keyword>
<keyword id="KW-0521">NADP</keyword>
<keyword id="KW-0547">Nucleotide-binding</keyword>
<keyword id="KW-0630">Potassium</keyword>
<comment type="function">
    <text evidence="1">Catalyzes the epimerization of the S- and R-forms of NAD(P)HX, a damaged form of NAD(P)H that is a result of enzymatic or heat-dependent hydration. This is a prerequisite for the S-specific NAD(P)H-hydrate dehydratase to allow the repair of both epimers of NAD(P)HX.</text>
</comment>
<comment type="catalytic activity">
    <reaction evidence="1">
        <text>(6R)-NADHX = (6S)-NADHX</text>
        <dbReference type="Rhea" id="RHEA:32215"/>
        <dbReference type="ChEBI" id="CHEBI:64074"/>
        <dbReference type="ChEBI" id="CHEBI:64075"/>
        <dbReference type="EC" id="5.1.99.6"/>
    </reaction>
</comment>
<comment type="catalytic activity">
    <reaction evidence="1">
        <text>(6R)-NADPHX = (6S)-NADPHX</text>
        <dbReference type="Rhea" id="RHEA:32227"/>
        <dbReference type="ChEBI" id="CHEBI:64076"/>
        <dbReference type="ChEBI" id="CHEBI:64077"/>
        <dbReference type="EC" id="5.1.99.6"/>
    </reaction>
</comment>
<comment type="cofactor">
    <cofactor evidence="1">
        <name>K(+)</name>
        <dbReference type="ChEBI" id="CHEBI:29103"/>
    </cofactor>
    <text evidence="1">Binds 1 potassium ion per subunit.</text>
</comment>
<comment type="similarity">
    <text evidence="1">Belongs to the NnrE/AIBP family.</text>
</comment>
<dbReference type="EC" id="5.1.99.6" evidence="1"/>
<dbReference type="EMBL" id="CP002844">
    <property type="protein sequence ID" value="AEI57267.1"/>
    <property type="molecule type" value="Genomic_DNA"/>
</dbReference>
<dbReference type="RefSeq" id="WP_003670082.1">
    <property type="nucleotide sequence ID" value="NC_015697.1"/>
</dbReference>
<dbReference type="SMR" id="F8DQP1"/>
<dbReference type="KEGG" id="lru:HMPREF0538_21057"/>
<dbReference type="HOGENOM" id="CLU_024853_0_1_9"/>
<dbReference type="Proteomes" id="UP000001924">
    <property type="component" value="Chromosome"/>
</dbReference>
<dbReference type="GO" id="GO:0046872">
    <property type="term" value="F:metal ion binding"/>
    <property type="evidence" value="ECO:0007669"/>
    <property type="project" value="UniProtKB-KW"/>
</dbReference>
<dbReference type="GO" id="GO:0052856">
    <property type="term" value="F:NAD(P)HX epimerase activity"/>
    <property type="evidence" value="ECO:0007669"/>
    <property type="project" value="UniProtKB-UniRule"/>
</dbReference>
<dbReference type="GO" id="GO:0000166">
    <property type="term" value="F:nucleotide binding"/>
    <property type="evidence" value="ECO:0007669"/>
    <property type="project" value="UniProtKB-KW"/>
</dbReference>
<dbReference type="Gene3D" id="3.40.50.10260">
    <property type="entry name" value="YjeF N-terminal domain"/>
    <property type="match status" value="1"/>
</dbReference>
<dbReference type="HAMAP" id="MF_01966">
    <property type="entry name" value="NADHX_epimerase"/>
    <property type="match status" value="1"/>
</dbReference>
<dbReference type="InterPro" id="IPR004443">
    <property type="entry name" value="YjeF_N_dom"/>
</dbReference>
<dbReference type="InterPro" id="IPR036652">
    <property type="entry name" value="YjeF_N_dom_sf"/>
</dbReference>
<dbReference type="InterPro" id="IPR032976">
    <property type="entry name" value="YJEFN_prot_NAXE-like"/>
</dbReference>
<dbReference type="NCBIfam" id="TIGR00197">
    <property type="entry name" value="yjeF_nterm"/>
    <property type="match status" value="1"/>
</dbReference>
<dbReference type="PANTHER" id="PTHR13232">
    <property type="entry name" value="NAD(P)H-HYDRATE EPIMERASE"/>
    <property type="match status" value="1"/>
</dbReference>
<dbReference type="PANTHER" id="PTHR13232:SF10">
    <property type="entry name" value="NAD(P)H-HYDRATE EPIMERASE"/>
    <property type="match status" value="1"/>
</dbReference>
<dbReference type="Pfam" id="PF03853">
    <property type="entry name" value="YjeF_N"/>
    <property type="match status" value="1"/>
</dbReference>
<dbReference type="SUPFAM" id="SSF64153">
    <property type="entry name" value="YjeF N-terminal domain-like"/>
    <property type="match status" value="1"/>
</dbReference>
<dbReference type="PROSITE" id="PS51385">
    <property type="entry name" value="YJEF_N"/>
    <property type="match status" value="1"/>
</dbReference>
<reference key="1">
    <citation type="submission" date="2011-06" db="EMBL/GenBank/DDBJ databases">
        <title>The complete genome of Lactobacillus reuteri ATCC 55730 / SD2112.</title>
        <authorList>
            <person name="Muzny D."/>
            <person name="Qin X."/>
            <person name="Buhay C."/>
            <person name="Dugan-Rocha S."/>
            <person name="Ding Y."/>
            <person name="Chen G."/>
            <person name="Hawes A."/>
            <person name="Holder M."/>
            <person name="Jhangiani S."/>
            <person name="Johnson A."/>
            <person name="Khan Z."/>
            <person name="Li Z."/>
            <person name="Liu W."/>
            <person name="Liu X."/>
            <person name="Perez L."/>
            <person name="Shen H."/>
            <person name="Wang Q."/>
            <person name="Watt J."/>
            <person name="Xi L."/>
            <person name="Xin Y."/>
            <person name="Zhou J."/>
            <person name="Deng J."/>
            <person name="Jiang H."/>
            <person name="Liu Y."/>
            <person name="Qu J."/>
            <person name="Song X.-Z."/>
            <person name="Zhang L."/>
            <person name="Villasana D."/>
            <person name="Johnson A."/>
            <person name="Liu J."/>
            <person name="Liyanage D."/>
            <person name="Lorensuhewa L."/>
            <person name="Robinson T."/>
            <person name="Song A."/>
            <person name="Song B.-B."/>
            <person name="Dinh H."/>
            <person name="Thornton R."/>
            <person name="Coyle M."/>
            <person name="Francisco L."/>
            <person name="Jackson L."/>
            <person name="Javaid M."/>
            <person name="Korchina V."/>
            <person name="Kovar C."/>
            <person name="Mata R."/>
            <person name="Mathew T."/>
            <person name="Ngo R."/>
            <person name="Nguyen L."/>
            <person name="Nguyen N."/>
            <person name="Okwuonu G."/>
            <person name="Ongeri F."/>
            <person name="Pham C."/>
            <person name="Simmons D."/>
            <person name="Wilczek-Boney K."/>
            <person name="Hale W."/>
            <person name="Jakkamsetti A."/>
            <person name="Pham P."/>
            <person name="Ruth R."/>
            <person name="San Lucas F."/>
            <person name="Warren J."/>
            <person name="Zhang J."/>
            <person name="Zhao Z."/>
            <person name="Zhou C."/>
            <person name="Zhu D."/>
            <person name="Lee S."/>
            <person name="Bess C."/>
            <person name="Blankenburg K."/>
            <person name="Forbes L."/>
            <person name="Fu Q."/>
            <person name="Gubbala S."/>
            <person name="Hirani K."/>
            <person name="Jayaseelan J.C."/>
            <person name="Lara F."/>
            <person name="Munidasa M."/>
            <person name="Palculict T."/>
            <person name="Patil S."/>
            <person name="Pu L.-L."/>
            <person name="Saada N."/>
            <person name="Tang L."/>
            <person name="Weissenberger G."/>
            <person name="Zhu Y."/>
            <person name="Hemphill L."/>
            <person name="Shang Y."/>
            <person name="Youmans B."/>
            <person name="Ayvaz T."/>
            <person name="Ross M."/>
            <person name="Santibanez J."/>
            <person name="Aqrawi P."/>
            <person name="Gross S."/>
            <person name="Joshi V."/>
            <person name="Fowler G."/>
            <person name="Nazareth L."/>
            <person name="Reid J."/>
            <person name="Worley K."/>
            <person name="Petrosino J."/>
            <person name="Highlander S."/>
            <person name="Gibbs R."/>
        </authorList>
    </citation>
    <scope>NUCLEOTIDE SEQUENCE [LARGE SCALE GENOMIC DNA]</scope>
    <source>
        <strain>ATCC 55730 / SD2112</strain>
    </source>
</reference>